<accession>Q95QZ5</accession>
<evidence type="ECO:0000255" key="1"/>
<evidence type="ECO:0000255" key="2">
    <source>
        <dbReference type="PROSITE-ProRule" id="PRU00498"/>
    </source>
</evidence>
<evidence type="ECO:0000305" key="3"/>
<proteinExistence type="inferred from homology"/>
<keyword id="KW-0325">Glycoprotein</keyword>
<keyword id="KW-0472">Membrane</keyword>
<keyword id="KW-1185">Reference proteome</keyword>
<keyword id="KW-0732">Signal</keyword>
<keyword id="KW-0812">Transmembrane</keyword>
<keyword id="KW-1133">Transmembrane helix</keyword>
<reference key="1">
    <citation type="journal article" date="1998" name="Science">
        <title>Genome sequence of the nematode C. elegans: a platform for investigating biology.</title>
        <authorList>
            <consortium name="The C. elegans sequencing consortium"/>
        </authorList>
    </citation>
    <scope>NUCLEOTIDE SEQUENCE [LARGE SCALE GENOMIC DNA]</scope>
    <source>
        <strain>Bristol N2</strain>
    </source>
</reference>
<name>TM2D2_CAEEL</name>
<organism>
    <name type="scientific">Caenorhabditis elegans</name>
    <dbReference type="NCBI Taxonomy" id="6239"/>
    <lineage>
        <taxon>Eukaryota</taxon>
        <taxon>Metazoa</taxon>
        <taxon>Ecdysozoa</taxon>
        <taxon>Nematoda</taxon>
        <taxon>Chromadorea</taxon>
        <taxon>Rhabditida</taxon>
        <taxon>Rhabditina</taxon>
        <taxon>Rhabditomorpha</taxon>
        <taxon>Rhabditoidea</taxon>
        <taxon>Rhabditidae</taxon>
        <taxon>Peloderinae</taxon>
        <taxon>Caenorhabditis</taxon>
    </lineage>
</organism>
<comment type="subcellular location">
    <subcellularLocation>
        <location evidence="3">Membrane</location>
        <topology evidence="3">Multi-pass membrane protein</topology>
    </subcellularLocation>
</comment>
<comment type="similarity">
    <text evidence="3">Belongs to the TM2 family.</text>
</comment>
<protein>
    <recommendedName>
        <fullName>TM2 domain-containing protein C41D11.9</fullName>
    </recommendedName>
</protein>
<dbReference type="EMBL" id="FO080509">
    <property type="protein sequence ID" value="CCD64258.1"/>
    <property type="molecule type" value="Genomic_DNA"/>
</dbReference>
<dbReference type="RefSeq" id="NP_491372.1">
    <property type="nucleotide sequence ID" value="NM_058971.3"/>
</dbReference>
<dbReference type="FunCoup" id="Q95QZ5">
    <property type="interactions" value="1887"/>
</dbReference>
<dbReference type="STRING" id="6239.C41D11.9.1"/>
<dbReference type="PaxDb" id="6239-C41D11.9"/>
<dbReference type="EnsemblMetazoa" id="C41D11.9.1">
    <property type="protein sequence ID" value="C41D11.9.1"/>
    <property type="gene ID" value="WBGene00016567"/>
</dbReference>
<dbReference type="GeneID" id="266651"/>
<dbReference type="KEGG" id="cel:CELE_C41D11.9"/>
<dbReference type="UCSC" id="C41D11.9">
    <property type="organism name" value="c. elegans"/>
</dbReference>
<dbReference type="AGR" id="WB:WBGene00016567"/>
<dbReference type="CTD" id="266651"/>
<dbReference type="WormBase" id="C41D11.9">
    <property type="protein sequence ID" value="CE29489"/>
    <property type="gene ID" value="WBGene00016567"/>
</dbReference>
<dbReference type="eggNOG" id="KOG4272">
    <property type="taxonomic scope" value="Eukaryota"/>
</dbReference>
<dbReference type="GeneTree" id="ENSGT00940000158389"/>
<dbReference type="HOGENOM" id="CLU_084872_1_0_1"/>
<dbReference type="InParanoid" id="Q95QZ5"/>
<dbReference type="OMA" id="FERKMIC"/>
<dbReference type="OrthoDB" id="10257855at2759"/>
<dbReference type="PhylomeDB" id="Q95QZ5"/>
<dbReference type="PRO" id="PR:Q95QZ5"/>
<dbReference type="Proteomes" id="UP000001940">
    <property type="component" value="Chromosome I"/>
</dbReference>
<dbReference type="Bgee" id="WBGene00016567">
    <property type="expression patterns" value="Expressed in embryo and 3 other cell types or tissues"/>
</dbReference>
<dbReference type="GO" id="GO:0016020">
    <property type="term" value="C:membrane"/>
    <property type="evidence" value="ECO:0007669"/>
    <property type="project" value="UniProtKB-SubCell"/>
</dbReference>
<dbReference type="InterPro" id="IPR007829">
    <property type="entry name" value="TM2"/>
</dbReference>
<dbReference type="InterPro" id="IPR050932">
    <property type="entry name" value="TM2D1-3-like"/>
</dbReference>
<dbReference type="PANTHER" id="PTHR21016">
    <property type="entry name" value="BETA-AMYLOID BINDING PROTEIN-RELATED"/>
    <property type="match status" value="1"/>
</dbReference>
<dbReference type="PANTHER" id="PTHR21016:SF7">
    <property type="entry name" value="TM2 DOMAIN-CONTAINING PROTEIN 3"/>
    <property type="match status" value="1"/>
</dbReference>
<dbReference type="Pfam" id="PF05154">
    <property type="entry name" value="TM2"/>
    <property type="match status" value="1"/>
</dbReference>
<sequence>MLHKILFLICLASFIPTIGSISGTKDVKSKNCDGSAGLTCTFPGDCRIGDTVKVNCTSRKGCPNPVSRNNVEAVCRFCWQLLPGDYDCEPATNCSTSSTKLLVTKCSAHSSVICMGQRNFYKRIPCNWSSGYSWTKTMILSVVLGGFGADRFYLGLWKSAIGKLFSFGGLGVWTLVDVVLIAVGYIKPYDGSMYI</sequence>
<feature type="signal peptide" evidence="1">
    <location>
        <begin position="1"/>
        <end position="20"/>
    </location>
</feature>
<feature type="chain" id="PRO_0000298994" description="TM2 domain-containing protein C41D11.9">
    <location>
        <begin position="21"/>
        <end position="195"/>
    </location>
</feature>
<feature type="topological domain" description="Extracellular" evidence="3">
    <location>
        <begin position="21"/>
        <end position="136"/>
    </location>
</feature>
<feature type="transmembrane region" description="Helical" evidence="1">
    <location>
        <begin position="137"/>
        <end position="157"/>
    </location>
</feature>
<feature type="topological domain" description="Cytoplasmic" evidence="3">
    <location>
        <begin position="158"/>
        <end position="163"/>
    </location>
</feature>
<feature type="transmembrane region" description="Helical" evidence="1">
    <location>
        <begin position="164"/>
        <end position="184"/>
    </location>
</feature>
<feature type="topological domain" description="Extracellular" evidence="3">
    <location>
        <begin position="185"/>
        <end position="195"/>
    </location>
</feature>
<feature type="domain" description="TM2" evidence="1">
    <location>
        <begin position="131"/>
        <end position="179"/>
    </location>
</feature>
<feature type="glycosylation site" description="N-linked (GlcNAc...) asparagine" evidence="2">
    <location>
        <position position="55"/>
    </location>
</feature>
<feature type="glycosylation site" description="N-linked (GlcNAc...) asparagine" evidence="2">
    <location>
        <position position="93"/>
    </location>
</feature>
<feature type="glycosylation site" description="N-linked (GlcNAc...) asparagine" evidence="2">
    <location>
        <position position="127"/>
    </location>
</feature>
<gene>
    <name type="ORF">C41D11.9</name>
</gene>